<sequence length="99" mass="10954">MHGEITTLQDYVLDLEPEATDLYCYEQLCDSSEEEEDTIDGPAGQAKPDTSNYNIVTSCCKCEATLRLCVQSTHIDIRKLEDLLMGTFGIVCPGCSQRA</sequence>
<feature type="chain" id="PRO_0000133433" description="Protein E7">
    <location>
        <begin position="1"/>
        <end position="99"/>
    </location>
</feature>
<feature type="zinc finger region" evidence="1">
    <location>
        <begin position="59"/>
        <end position="95"/>
    </location>
</feature>
<feature type="region of interest" description="E7 terminal domain" evidence="1">
    <location>
        <begin position="1"/>
        <end position="41"/>
    </location>
</feature>
<feature type="short sequence motif" description="LXCXE motif; interaction with host RB1 and TMEM173/STING" evidence="1">
    <location>
        <begin position="22"/>
        <end position="26"/>
    </location>
</feature>
<feature type="short sequence motif" description="Nuclear export signal" evidence="1">
    <location>
        <begin position="77"/>
        <end position="85"/>
    </location>
</feature>
<comment type="function">
    <text evidence="1">Plays a role in viral genome replication by driving entry of quiescent cells into the cell cycle. Stimulation of progression from G1 to S phase allows the virus to efficiently use the cellular DNA replicating machinery to achieve viral genome replication. E7 protein has both transforming and trans-activating activities. Induces the disassembly of the E2F1 transcription factor from RB1, with subsequent transcriptional activation of E2F1-regulated S-phase genes. Interferes with host histone deacetylation mediated by HDAC1 and HDAC2, leading to transcription activation. Also plays a role in the inhibition of both antiviral and antiproliferative functions of host interferon alpha. Interaction with host TMEM173/STING impairs the ability of TMEM173/STING to sense cytosolic DNA and promote the production of type I interferon (IFN-alpha and IFN-beta).</text>
</comment>
<comment type="subunit">
    <text evidence="1">Homodimer. Homooligomer. Interacts with host RB1; this interaction induces dissociation of RB1-E2F1 complex thereby disrupting RB1 activity. Interacts with host EP300; this interaction represses EP300 transcriptional activity. Interacts with protein E2; this interaction inhibits E7 oncogenic activity. Interacts with host TMEM173/STING; this interaction impairs the ability of TMEM173/STING to sense cytosolic DNA and promote the production of type I interferon (IFN-alpha and IFN-beta).</text>
</comment>
<comment type="subcellular location">
    <subcellularLocation>
        <location evidence="1">Host cytoplasm</location>
    </subcellularLocation>
    <subcellularLocation>
        <location evidence="1">Host nucleus</location>
    </subcellularLocation>
    <text evidence="1">Predominantly found in the host nucleus.</text>
</comment>
<comment type="domain">
    <text evidence="1">The E7 terminal domain is an intrinsically disordered domain, whose flexibility and conformational transitions confer target adaptability to the oncoprotein. It allows adaptation to a variety of protein targets and exposes the PEST degradation sequence that regulates its turnover in the cell.</text>
</comment>
<comment type="PTM">
    <text evidence="1">Highly phosphorylated.</text>
</comment>
<comment type="similarity">
    <text evidence="1">Belongs to the papillomaviridae E7 protein family.</text>
</comment>
<proteinExistence type="inferred from homology"/>
<organism>
    <name type="scientific">Human papillomavirus 35</name>
    <dbReference type="NCBI Taxonomy" id="10587"/>
    <lineage>
        <taxon>Viruses</taxon>
        <taxon>Monodnaviria</taxon>
        <taxon>Shotokuvirae</taxon>
        <taxon>Cossaviricota</taxon>
        <taxon>Papovaviricetes</taxon>
        <taxon>Zurhausenvirales</taxon>
        <taxon>Papillomaviridae</taxon>
        <taxon>Firstpapillomavirinae</taxon>
        <taxon>Alphapapillomavirus</taxon>
        <taxon>Alphapapillomavirus 9</taxon>
    </lineage>
</organism>
<gene>
    <name evidence="1" type="primary">E7</name>
</gene>
<dbReference type="EMBL" id="M74117">
    <property type="protein sequence ID" value="AAA46967.1"/>
    <property type="molecule type" value="Genomic_DNA"/>
</dbReference>
<dbReference type="EMBL" id="X74477">
    <property type="protein sequence ID" value="CAA52562.1"/>
    <property type="molecule type" value="Genomic_DNA"/>
</dbReference>
<dbReference type="PIR" id="F40824">
    <property type="entry name" value="W7WL35"/>
</dbReference>
<dbReference type="SMR" id="P27230"/>
<dbReference type="Proteomes" id="UP000007711">
    <property type="component" value="Segment"/>
</dbReference>
<dbReference type="Proteomes" id="UP000113298">
    <property type="component" value="Genome"/>
</dbReference>
<dbReference type="GO" id="GO:0030430">
    <property type="term" value="C:host cell cytoplasm"/>
    <property type="evidence" value="ECO:0007669"/>
    <property type="project" value="UniProtKB-SubCell"/>
</dbReference>
<dbReference type="GO" id="GO:0042025">
    <property type="term" value="C:host cell nucleus"/>
    <property type="evidence" value="ECO:0007669"/>
    <property type="project" value="UniProtKB-SubCell"/>
</dbReference>
<dbReference type="GO" id="GO:0003677">
    <property type="term" value="F:DNA binding"/>
    <property type="evidence" value="ECO:0007669"/>
    <property type="project" value="UniProtKB-UniRule"/>
</dbReference>
<dbReference type="GO" id="GO:0003700">
    <property type="term" value="F:DNA-binding transcription factor activity"/>
    <property type="evidence" value="ECO:0007669"/>
    <property type="project" value="UniProtKB-UniRule"/>
</dbReference>
<dbReference type="GO" id="GO:0019904">
    <property type="term" value="F:protein domain specific binding"/>
    <property type="evidence" value="ECO:0007669"/>
    <property type="project" value="UniProtKB-UniRule"/>
</dbReference>
<dbReference type="GO" id="GO:0008270">
    <property type="term" value="F:zinc ion binding"/>
    <property type="evidence" value="ECO:0007669"/>
    <property type="project" value="UniProtKB-KW"/>
</dbReference>
<dbReference type="GO" id="GO:0006351">
    <property type="term" value="P:DNA-templated transcription"/>
    <property type="evidence" value="ECO:0007669"/>
    <property type="project" value="UniProtKB-UniRule"/>
</dbReference>
<dbReference type="GO" id="GO:0039645">
    <property type="term" value="P:symbiont-mediated perturbation of host cell cycle G1/S transition checkpoint"/>
    <property type="evidence" value="ECO:0007669"/>
    <property type="project" value="UniProtKB-UniRule"/>
</dbReference>
<dbReference type="GO" id="GO:0052170">
    <property type="term" value="P:symbiont-mediated suppression of host innate immune response"/>
    <property type="evidence" value="ECO:0007669"/>
    <property type="project" value="UniProtKB-KW"/>
</dbReference>
<dbReference type="GO" id="GO:0039502">
    <property type="term" value="P:symbiont-mediated suppression of host type I interferon-mediated signaling pathway"/>
    <property type="evidence" value="ECO:0007669"/>
    <property type="project" value="UniProtKB-UniRule"/>
</dbReference>
<dbReference type="Gene3D" id="3.30.160.330">
    <property type="match status" value="1"/>
</dbReference>
<dbReference type="HAMAP" id="MF_04004">
    <property type="entry name" value="PPV_E7"/>
    <property type="match status" value="1"/>
</dbReference>
<dbReference type="InterPro" id="IPR000148">
    <property type="entry name" value="Papilloma_E7"/>
</dbReference>
<dbReference type="Pfam" id="PF00527">
    <property type="entry name" value="E7"/>
    <property type="match status" value="1"/>
</dbReference>
<dbReference type="PIRSF" id="PIRSF003407">
    <property type="entry name" value="Papvi_E7"/>
    <property type="match status" value="1"/>
</dbReference>
<dbReference type="SUPFAM" id="SSF161234">
    <property type="entry name" value="E7 C-terminal domain-like"/>
    <property type="match status" value="1"/>
</dbReference>
<organismHost>
    <name type="scientific">Homo sapiens</name>
    <name type="common">Human</name>
    <dbReference type="NCBI Taxonomy" id="9606"/>
</organismHost>
<name>VE7_HPV35</name>
<keyword id="KW-0010">Activator</keyword>
<keyword id="KW-0238">DNA-binding</keyword>
<keyword id="KW-0244">Early protein</keyword>
<keyword id="KW-1078">G1/S host cell cycle checkpoint dysregulation by virus</keyword>
<keyword id="KW-1035">Host cytoplasm</keyword>
<keyword id="KW-1048">Host nucleus</keyword>
<keyword id="KW-0945">Host-virus interaction</keyword>
<keyword id="KW-1090">Inhibition of host innate immune response by virus</keyword>
<keyword id="KW-1114">Inhibition of host interferon signaling pathway by virus</keyword>
<keyword id="KW-0922">Interferon antiviral system evasion</keyword>
<keyword id="KW-0479">Metal-binding</keyword>
<keyword id="KW-1121">Modulation of host cell cycle by virus</keyword>
<keyword id="KW-0553">Oncogene</keyword>
<keyword id="KW-1185">Reference proteome</keyword>
<keyword id="KW-0804">Transcription</keyword>
<keyword id="KW-0805">Transcription regulation</keyword>
<keyword id="KW-0899">Viral immunoevasion</keyword>
<keyword id="KW-0862">Zinc</keyword>
<keyword id="KW-0863">Zinc-finger</keyword>
<accession>P27230</accession>
<protein>
    <recommendedName>
        <fullName evidence="1">Protein E7</fullName>
    </recommendedName>
</protein>
<evidence type="ECO:0000255" key="1">
    <source>
        <dbReference type="HAMAP-Rule" id="MF_04004"/>
    </source>
</evidence>
<reference key="1">
    <citation type="journal article" date="1994" name="Curr. Top. Microbiol. Immunol.">
        <title>Primer-directed sequencing of human papillomavirus types.</title>
        <authorList>
            <person name="Delius H."/>
            <person name="Hofmann B."/>
        </authorList>
    </citation>
    <scope>NUCLEOTIDE SEQUENCE [GENOMIC DNA]</scope>
    <source>
        <strain>Isolate 35H</strain>
    </source>
</reference>
<reference key="2">
    <citation type="journal article" date="1992" name="Virology">
        <title>The phylogenetic relationship and complete nucleotide sequence of human papillomavirus type 35.</title>
        <authorList>
            <person name="Marich J.E."/>
            <person name="Pontsler A.V."/>
            <person name="Rice S.M."/>
            <person name="McGraw K.A."/>
            <person name="Dubensky T.W."/>
        </authorList>
    </citation>
    <scope>NUCLEOTIDE SEQUENCE [GENOMIC DNA]</scope>
</reference>
<reference key="3">
    <citation type="journal article" date="2002" name="Rev. Med. Virol.">
        <title>Interactions of SV40 large T antigen and other viral proteins with retinoblastoma tumour suppressor.</title>
        <authorList>
            <person name="Lee C."/>
            <person name="Cho Y."/>
        </authorList>
    </citation>
    <scope>REVIEW</scope>
</reference>